<dbReference type="EMBL" id="M20568">
    <property type="protein sequence ID" value="AAA64717.1"/>
    <property type="molecule type" value="Genomic_DNA"/>
</dbReference>
<dbReference type="EMBL" id="M15815">
    <property type="protein sequence ID" value="AAA22158.1"/>
    <property type="molecule type" value="Genomic_DNA"/>
</dbReference>
<dbReference type="PIR" id="A26940">
    <property type="entry name" value="A26940"/>
</dbReference>
<dbReference type="SMR" id="P10336"/>
<dbReference type="DIP" id="DIP-59676N"/>
<dbReference type="IntAct" id="P10336">
    <property type="interactions" value="1"/>
</dbReference>
<dbReference type="BioCyc" id="MetaCyc:MONOMER-19487"/>
<dbReference type="UniPathway" id="UPA00782"/>
<dbReference type="GO" id="GO:0046872">
    <property type="term" value="F:metal ion binding"/>
    <property type="evidence" value="ECO:0007669"/>
    <property type="project" value="UniProtKB-KW"/>
</dbReference>
<dbReference type="GO" id="GO:0016163">
    <property type="term" value="F:nitrogenase activity"/>
    <property type="evidence" value="ECO:0007669"/>
    <property type="project" value="InterPro"/>
</dbReference>
<dbReference type="GO" id="GO:0032324">
    <property type="term" value="P:molybdopterin cofactor biosynthetic process"/>
    <property type="evidence" value="ECO:0000315"/>
    <property type="project" value="CACAO"/>
</dbReference>
<dbReference type="GO" id="GO:0009399">
    <property type="term" value="P:nitrogen fixation"/>
    <property type="evidence" value="ECO:0007669"/>
    <property type="project" value="UniProtKB-KW"/>
</dbReference>
<dbReference type="GO" id="GO:0065003">
    <property type="term" value="P:protein-containing complex assembly"/>
    <property type="evidence" value="ECO:0007669"/>
    <property type="project" value="InterPro"/>
</dbReference>
<dbReference type="CDD" id="cd01966">
    <property type="entry name" value="Nitrogenase_NifN_1"/>
    <property type="match status" value="1"/>
</dbReference>
<dbReference type="Gene3D" id="6.10.250.1090">
    <property type="match status" value="1"/>
</dbReference>
<dbReference type="Gene3D" id="3.40.50.1980">
    <property type="entry name" value="Nitrogenase molybdenum iron protein domain"/>
    <property type="match status" value="3"/>
</dbReference>
<dbReference type="InterPro" id="IPR050152">
    <property type="entry name" value="ChlB/BchB/BchZ"/>
</dbReference>
<dbReference type="InterPro" id="IPR000510">
    <property type="entry name" value="Nase/OxRdtase_comp1"/>
</dbReference>
<dbReference type="InterPro" id="IPR000318">
    <property type="entry name" value="Nase_comp1_CS"/>
</dbReference>
<dbReference type="InterPro" id="IPR005975">
    <property type="entry name" value="Nase_Mo-Fe_CF"/>
</dbReference>
<dbReference type="NCBIfam" id="TIGR01285">
    <property type="entry name" value="nifN"/>
    <property type="match status" value="1"/>
</dbReference>
<dbReference type="PANTHER" id="PTHR33712">
    <property type="entry name" value="LIGHT-INDEPENDENT PROTOCHLOROPHYLLIDE REDUCTASE SUBUNIT B"/>
    <property type="match status" value="1"/>
</dbReference>
<dbReference type="PANTHER" id="PTHR33712:SF7">
    <property type="entry name" value="LIGHT-INDEPENDENT PROTOCHLOROPHYLLIDE REDUCTASE SUBUNIT B"/>
    <property type="match status" value="1"/>
</dbReference>
<dbReference type="Pfam" id="PF00148">
    <property type="entry name" value="Oxidored_nitro"/>
    <property type="match status" value="1"/>
</dbReference>
<dbReference type="SUPFAM" id="SSF53807">
    <property type="entry name" value="Helical backbone' metal receptor"/>
    <property type="match status" value="1"/>
</dbReference>
<dbReference type="PROSITE" id="PS00699">
    <property type="entry name" value="NITROGENASE_1_1"/>
    <property type="match status" value="1"/>
</dbReference>
<gene>
    <name type="primary">nifN</name>
</gene>
<comment type="function">
    <text>This protein may play a role in the biosynthesis of the prosthetic group of nitrogenase (FeMo cofactor).</text>
</comment>
<comment type="pathway">
    <text>Cofactor biosynthesis; Fe-Mo cofactor biosynthesis.</text>
</comment>
<comment type="similarity">
    <text evidence="2">Belongs to the NifD/NifK/NifE/NifN family.</text>
</comment>
<keyword id="KW-0479">Metal-binding</keyword>
<keyword id="KW-0535">Nitrogen fixation</keyword>
<proteinExistence type="inferred from homology"/>
<feature type="chain" id="PRO_0000153126" description="Nitrogenase iron-molybdenum cofactor biosynthesis protein NifN">
    <location>
        <begin position="1"/>
        <end position="458"/>
    </location>
</feature>
<feature type="binding site" evidence="1">
    <location>
        <position position="44"/>
    </location>
    <ligand>
        <name>[7Fe-Mo-9S-C-homocitryl] cluster</name>
        <dbReference type="ChEBI" id="CHEBI:30409"/>
        <note>cofactor</note>
    </ligand>
</feature>
<name>NIFN_AZOVI</name>
<evidence type="ECO:0000255" key="1"/>
<evidence type="ECO:0000305" key="2"/>
<sequence length="458" mass="49208">MAEIINRNKALAVSPLKASQTMGAALAILGLALSMPLFHGSQGCTAFAKVFFVRHFREPVPLQTTAMDQVSSVMGADENVVEALKTICERQNPSVIGLLTTGLSETQGCDLHTALHEFRTQYEEYKDVPIVPVNTPDFSGCFESGFAAAVKAIVETLVPERRDQVGKRPRQVNVLCSANLTPGDLEYIAESIESFGLRPLLIPDLSGSLDGHLDENRFNALTTGGLSVAELATAGQSVATLVVGQSLAGAADALAERTGVPDRRFGMLYGLDAVDAWLMALAEISGNPVPDRYKRQRAQLQDAMLDTHFMLSSARTAIAADPDLLLGFDALLRSMGAHTVAAVVPARAAALVDSPLPSVRVGDLEDLEHAARAGQAQLVIGNSHALASARRLGVPLLRAGFPQYDLLGGFQRCWSGYRGSSQVLFDLANLLVEHHQGIQPYHSIYAQKPATEQPQWRH</sequence>
<organism>
    <name type="scientific">Azotobacter vinelandii</name>
    <dbReference type="NCBI Taxonomy" id="354"/>
    <lineage>
        <taxon>Bacteria</taxon>
        <taxon>Pseudomonadati</taxon>
        <taxon>Pseudomonadota</taxon>
        <taxon>Gammaproteobacteria</taxon>
        <taxon>Pseudomonadales</taxon>
        <taxon>Pseudomonadaceae</taxon>
        <taxon>Azotobacter</taxon>
    </lineage>
</organism>
<accession>P10336</accession>
<protein>
    <recommendedName>
        <fullName>Nitrogenase iron-molybdenum cofactor biosynthesis protein NifN</fullName>
    </recommendedName>
</protein>
<reference key="1">
    <citation type="journal article" date="1989" name="J. Bacteriol.">
        <title>Physical and genetic map of the major nif gene cluster from Azotobacter vinelandii.</title>
        <authorList>
            <person name="Jacobson M.R."/>
            <person name="Brigle K.E."/>
            <person name="Bennett L.T."/>
            <person name="Setterquist R.A."/>
            <person name="Wilson M.S."/>
            <person name="Cash V.L."/>
            <person name="Beynon J."/>
            <person name="Newton W.E."/>
            <person name="Dean D.R."/>
        </authorList>
    </citation>
    <scope>NUCLEOTIDE SEQUENCE [GENOMIC DNA]</scope>
    <source>
        <strain>ATCC 13705 / OP1 / DSM 366 / NCIMB 11614 / LMG 3878 / UW</strain>
    </source>
</reference>
<reference key="2">
    <citation type="journal article" date="1987" name="J. Bacteriol.">
        <title>Products of the iron-molybdenum cofactor-specific biosynthetic genes, nifE and nifN, are structurally homologous to the products of the nitrogenase molybdenum-iron protein genes, nifD and nifK.</title>
        <authorList>
            <person name="Brigle K.E."/>
            <person name="Weiss M.C."/>
            <person name="Newton W.E."/>
            <person name="Dean D.R."/>
        </authorList>
    </citation>
    <scope>NUCLEOTIDE SEQUENCE [GENOMIC DNA]</scope>
</reference>